<reference key="1">
    <citation type="submission" date="2007-04" db="EMBL/GenBank/DDBJ databases">
        <title>Complete sequence of Shewanella putrefaciens CN-32.</title>
        <authorList>
            <consortium name="US DOE Joint Genome Institute"/>
            <person name="Copeland A."/>
            <person name="Lucas S."/>
            <person name="Lapidus A."/>
            <person name="Barry K."/>
            <person name="Detter J.C."/>
            <person name="Glavina del Rio T."/>
            <person name="Hammon N."/>
            <person name="Israni S."/>
            <person name="Dalin E."/>
            <person name="Tice H."/>
            <person name="Pitluck S."/>
            <person name="Chain P."/>
            <person name="Malfatti S."/>
            <person name="Shin M."/>
            <person name="Vergez L."/>
            <person name="Schmutz J."/>
            <person name="Larimer F."/>
            <person name="Land M."/>
            <person name="Hauser L."/>
            <person name="Kyrpides N."/>
            <person name="Mikhailova N."/>
            <person name="Romine M.F."/>
            <person name="Fredrickson J."/>
            <person name="Tiedje J."/>
            <person name="Richardson P."/>
        </authorList>
    </citation>
    <scope>NUCLEOTIDE SEQUENCE [LARGE SCALE GENOMIC DNA]</scope>
    <source>
        <strain>CN-32 / ATCC BAA-453</strain>
    </source>
</reference>
<evidence type="ECO:0000255" key="1">
    <source>
        <dbReference type="HAMAP-Rule" id="MF_00089"/>
    </source>
</evidence>
<evidence type="ECO:0000256" key="2">
    <source>
        <dbReference type="SAM" id="MobiDB-lite"/>
    </source>
</evidence>
<protein>
    <recommendedName>
        <fullName evidence="1">Phosphomethylpyrimidine synthase</fullName>
        <ecNumber evidence="1">4.1.99.17</ecNumber>
    </recommendedName>
    <alternativeName>
        <fullName evidence="1">Hydroxymethylpyrimidine phosphate synthase</fullName>
        <shortName evidence="1">HMP-P synthase</shortName>
        <shortName evidence="1">HMP-phosphate synthase</shortName>
        <shortName evidence="1">HMPP synthase</shortName>
    </alternativeName>
    <alternativeName>
        <fullName evidence="1">Thiamine biosynthesis protein ThiC</fullName>
    </alternativeName>
</protein>
<organism>
    <name type="scientific">Shewanella putrefaciens (strain CN-32 / ATCC BAA-453)</name>
    <dbReference type="NCBI Taxonomy" id="319224"/>
    <lineage>
        <taxon>Bacteria</taxon>
        <taxon>Pseudomonadati</taxon>
        <taxon>Pseudomonadota</taxon>
        <taxon>Gammaproteobacteria</taxon>
        <taxon>Alteromonadales</taxon>
        <taxon>Shewanellaceae</taxon>
        <taxon>Shewanella</taxon>
    </lineage>
</organism>
<sequence length="712" mass="78310">MSSSNQNLAIAANAIDITAPESTIPNKSKVPNKSAESSQSTVPKAPSRREIRAQAQAFIDTLAPLQHTNSQKVYLEGSSADIRVGMRQILQTDTLVGGTDDAPIMEKNPPIRVYDCAGPYSDPEADINVRLGLVKLRQNWILARKDTEQLPCATSDFTQQRLADDGLDHLRFEAGSSAIVRPRRALQGKRVSQLHYARQGIITPEMEYVAIRENMALAEVQDEILNRKAKGEAFGALVGEPITAEFVRAEVARGRAIIPLNINHPEAEPMIIGRNFLVKVNANIGNSAVTSSIEEEVEKLVWSTRWGADTVMDLSTGRYIHETREWIIRNSPVPIGTVPIYQALEKVNGVAEDLTWEVFRDTLIEQAEQGVDYFTIHAGVLLRYVPMTAKRVTGIVSRGGSIMAKWCLSHHKENFLYSHFREICELCVAYDVSLSLGDGMRPGSIADANDAAQFAELETLGELVKIAWEYDVQTIIEGPGHIPMQLIKENMDKQLAHCGEAPFYTLGPQITDIAPGYDHFTSGIGAAMIAWYGCAMLCYVTPKEHLGLPNKQDVKQGLIAYKIAAHAADVAKGHPSAQIRDNALAKARFEFRWEDQYNLGLDPETARAYHDESLPQESAKVAHFCSMCGPKFCSMKITQDVRAYAAGLEAAQTKAEQVEAAAQAMQVTIKTPQELEAAMALKSAQFAASGAEIYQVIDKHVKDKLVAEAEEA</sequence>
<accession>A4Y6R2</accession>
<dbReference type="EC" id="4.1.99.17" evidence="1"/>
<dbReference type="EMBL" id="CP000681">
    <property type="protein sequence ID" value="ABP75645.1"/>
    <property type="molecule type" value="Genomic_DNA"/>
</dbReference>
<dbReference type="SMR" id="A4Y6R2"/>
<dbReference type="STRING" id="319224.Sputcn32_1922"/>
<dbReference type="KEGG" id="spc:Sputcn32_1922"/>
<dbReference type="eggNOG" id="COG0422">
    <property type="taxonomic scope" value="Bacteria"/>
</dbReference>
<dbReference type="HOGENOM" id="CLU_013181_2_1_6"/>
<dbReference type="UniPathway" id="UPA00060"/>
<dbReference type="GO" id="GO:0005829">
    <property type="term" value="C:cytosol"/>
    <property type="evidence" value="ECO:0007669"/>
    <property type="project" value="TreeGrafter"/>
</dbReference>
<dbReference type="GO" id="GO:0051539">
    <property type="term" value="F:4 iron, 4 sulfur cluster binding"/>
    <property type="evidence" value="ECO:0007669"/>
    <property type="project" value="UniProtKB-KW"/>
</dbReference>
<dbReference type="GO" id="GO:0016830">
    <property type="term" value="F:carbon-carbon lyase activity"/>
    <property type="evidence" value="ECO:0007669"/>
    <property type="project" value="InterPro"/>
</dbReference>
<dbReference type="GO" id="GO:0008270">
    <property type="term" value="F:zinc ion binding"/>
    <property type="evidence" value="ECO:0007669"/>
    <property type="project" value="UniProtKB-UniRule"/>
</dbReference>
<dbReference type="GO" id="GO:0009228">
    <property type="term" value="P:thiamine biosynthetic process"/>
    <property type="evidence" value="ECO:0007669"/>
    <property type="project" value="UniProtKB-KW"/>
</dbReference>
<dbReference type="GO" id="GO:0009229">
    <property type="term" value="P:thiamine diphosphate biosynthetic process"/>
    <property type="evidence" value="ECO:0007669"/>
    <property type="project" value="UniProtKB-UniRule"/>
</dbReference>
<dbReference type="FunFam" id="3.20.20.540:FF:000001">
    <property type="entry name" value="Phosphomethylpyrimidine synthase"/>
    <property type="match status" value="1"/>
</dbReference>
<dbReference type="Gene3D" id="6.10.250.620">
    <property type="match status" value="1"/>
</dbReference>
<dbReference type="Gene3D" id="3.20.20.540">
    <property type="entry name" value="Radical SAM ThiC family, central domain"/>
    <property type="match status" value="1"/>
</dbReference>
<dbReference type="HAMAP" id="MF_00089">
    <property type="entry name" value="ThiC"/>
    <property type="match status" value="1"/>
</dbReference>
<dbReference type="InterPro" id="IPR037509">
    <property type="entry name" value="ThiC"/>
</dbReference>
<dbReference type="InterPro" id="IPR025747">
    <property type="entry name" value="ThiC-associated_dom"/>
</dbReference>
<dbReference type="InterPro" id="IPR038521">
    <property type="entry name" value="ThiC/Bza_core_dom"/>
</dbReference>
<dbReference type="InterPro" id="IPR002817">
    <property type="entry name" value="ThiC/BzaA/B"/>
</dbReference>
<dbReference type="NCBIfam" id="NF006763">
    <property type="entry name" value="PRK09284.1"/>
    <property type="match status" value="1"/>
</dbReference>
<dbReference type="NCBIfam" id="NF009895">
    <property type="entry name" value="PRK13352.1"/>
    <property type="match status" value="1"/>
</dbReference>
<dbReference type="NCBIfam" id="TIGR00190">
    <property type="entry name" value="thiC"/>
    <property type="match status" value="1"/>
</dbReference>
<dbReference type="PANTHER" id="PTHR30557:SF1">
    <property type="entry name" value="PHOSPHOMETHYLPYRIMIDINE SYNTHASE, CHLOROPLASTIC"/>
    <property type="match status" value="1"/>
</dbReference>
<dbReference type="PANTHER" id="PTHR30557">
    <property type="entry name" value="THIAMINE BIOSYNTHESIS PROTEIN THIC"/>
    <property type="match status" value="1"/>
</dbReference>
<dbReference type="Pfam" id="PF13667">
    <property type="entry name" value="ThiC-associated"/>
    <property type="match status" value="1"/>
</dbReference>
<dbReference type="Pfam" id="PF01964">
    <property type="entry name" value="ThiC_Rad_SAM"/>
    <property type="match status" value="1"/>
</dbReference>
<dbReference type="SFLD" id="SFLDF00407">
    <property type="entry name" value="phosphomethylpyrimidine_syntha"/>
    <property type="match status" value="1"/>
</dbReference>
<dbReference type="SFLD" id="SFLDG01114">
    <property type="entry name" value="phosphomethylpyrimidine_syntha"/>
    <property type="match status" value="1"/>
</dbReference>
<dbReference type="SFLD" id="SFLDS00113">
    <property type="entry name" value="Radical_SAM_Phosphomethylpyrim"/>
    <property type="match status" value="1"/>
</dbReference>
<keyword id="KW-0004">4Fe-4S</keyword>
<keyword id="KW-0408">Iron</keyword>
<keyword id="KW-0411">Iron-sulfur</keyword>
<keyword id="KW-0456">Lyase</keyword>
<keyword id="KW-0479">Metal-binding</keyword>
<keyword id="KW-0949">S-adenosyl-L-methionine</keyword>
<keyword id="KW-0784">Thiamine biosynthesis</keyword>
<keyword id="KW-0862">Zinc</keyword>
<gene>
    <name evidence="1" type="primary">thiC</name>
    <name type="ordered locus">Sputcn32_1922</name>
</gene>
<feature type="chain" id="PRO_1000004802" description="Phosphomethylpyrimidine synthase">
    <location>
        <begin position="1"/>
        <end position="712"/>
    </location>
</feature>
<feature type="region of interest" description="Disordered" evidence="2">
    <location>
        <begin position="14"/>
        <end position="49"/>
    </location>
</feature>
<feature type="compositionally biased region" description="Polar residues" evidence="2">
    <location>
        <begin position="20"/>
        <end position="42"/>
    </location>
</feature>
<feature type="binding site" evidence="1">
    <location>
        <position position="283"/>
    </location>
    <ligand>
        <name>substrate</name>
    </ligand>
</feature>
<feature type="binding site" evidence="1">
    <location>
        <position position="312"/>
    </location>
    <ligand>
        <name>substrate</name>
    </ligand>
</feature>
<feature type="binding site" evidence="1">
    <location>
        <position position="341"/>
    </location>
    <ligand>
        <name>substrate</name>
    </ligand>
</feature>
<feature type="binding site" evidence="1">
    <location>
        <position position="377"/>
    </location>
    <ligand>
        <name>substrate</name>
    </ligand>
</feature>
<feature type="binding site" evidence="1">
    <location>
        <begin position="397"/>
        <end position="399"/>
    </location>
    <ligand>
        <name>substrate</name>
    </ligand>
</feature>
<feature type="binding site" evidence="1">
    <location>
        <begin position="438"/>
        <end position="441"/>
    </location>
    <ligand>
        <name>substrate</name>
    </ligand>
</feature>
<feature type="binding site" evidence="1">
    <location>
        <position position="477"/>
    </location>
    <ligand>
        <name>substrate</name>
    </ligand>
</feature>
<feature type="binding site" evidence="1">
    <location>
        <position position="481"/>
    </location>
    <ligand>
        <name>Zn(2+)</name>
        <dbReference type="ChEBI" id="CHEBI:29105"/>
    </ligand>
</feature>
<feature type="binding site" evidence="1">
    <location>
        <position position="504"/>
    </location>
    <ligand>
        <name>substrate</name>
    </ligand>
</feature>
<feature type="binding site" evidence="1">
    <location>
        <position position="545"/>
    </location>
    <ligand>
        <name>Zn(2+)</name>
        <dbReference type="ChEBI" id="CHEBI:29105"/>
    </ligand>
</feature>
<feature type="binding site" evidence="1">
    <location>
        <position position="625"/>
    </location>
    <ligand>
        <name>[4Fe-4S] cluster</name>
        <dbReference type="ChEBI" id="CHEBI:49883"/>
        <note>4Fe-4S-S-AdoMet</note>
    </ligand>
</feature>
<feature type="binding site" evidence="1">
    <location>
        <position position="628"/>
    </location>
    <ligand>
        <name>[4Fe-4S] cluster</name>
        <dbReference type="ChEBI" id="CHEBI:49883"/>
        <note>4Fe-4S-S-AdoMet</note>
    </ligand>
</feature>
<feature type="binding site" evidence="1">
    <location>
        <position position="633"/>
    </location>
    <ligand>
        <name>[4Fe-4S] cluster</name>
        <dbReference type="ChEBI" id="CHEBI:49883"/>
        <note>4Fe-4S-S-AdoMet</note>
    </ligand>
</feature>
<proteinExistence type="inferred from homology"/>
<comment type="function">
    <text evidence="1">Catalyzes the synthesis of the hydroxymethylpyrimidine phosphate (HMP-P) moiety of thiamine from aminoimidazole ribotide (AIR) in a radical S-adenosyl-L-methionine (SAM)-dependent reaction.</text>
</comment>
<comment type="catalytic activity">
    <reaction evidence="1">
        <text>5-amino-1-(5-phospho-beta-D-ribosyl)imidazole + S-adenosyl-L-methionine = 4-amino-2-methyl-5-(phosphooxymethyl)pyrimidine + CO + 5'-deoxyadenosine + formate + L-methionine + 3 H(+)</text>
        <dbReference type="Rhea" id="RHEA:24840"/>
        <dbReference type="ChEBI" id="CHEBI:15378"/>
        <dbReference type="ChEBI" id="CHEBI:15740"/>
        <dbReference type="ChEBI" id="CHEBI:17245"/>
        <dbReference type="ChEBI" id="CHEBI:17319"/>
        <dbReference type="ChEBI" id="CHEBI:57844"/>
        <dbReference type="ChEBI" id="CHEBI:58354"/>
        <dbReference type="ChEBI" id="CHEBI:59789"/>
        <dbReference type="ChEBI" id="CHEBI:137981"/>
        <dbReference type="EC" id="4.1.99.17"/>
    </reaction>
</comment>
<comment type="cofactor">
    <cofactor evidence="1">
        <name>[4Fe-4S] cluster</name>
        <dbReference type="ChEBI" id="CHEBI:49883"/>
    </cofactor>
    <text evidence="1">Binds 1 [4Fe-4S] cluster per subunit. The cluster is coordinated with 3 cysteines and an exchangeable S-adenosyl-L-methionine.</text>
</comment>
<comment type="pathway">
    <text evidence="1">Cofactor biosynthesis; thiamine diphosphate biosynthesis.</text>
</comment>
<comment type="subunit">
    <text evidence="1">Homodimer.</text>
</comment>
<comment type="similarity">
    <text evidence="1">Belongs to the ThiC family.</text>
</comment>
<name>THIC_SHEPC</name>